<accession>B1ZGG8</accession>
<feature type="chain" id="PRO_1000134054" description="2,3,4,5-tetrahydropyridine-2,6-dicarboxylate N-succinyltransferase">
    <location>
        <begin position="1"/>
        <end position="280"/>
    </location>
</feature>
<dbReference type="EC" id="2.3.1.117" evidence="1"/>
<dbReference type="EMBL" id="CP001029">
    <property type="protein sequence ID" value="ACB79829.1"/>
    <property type="molecule type" value="Genomic_DNA"/>
</dbReference>
<dbReference type="RefSeq" id="WP_012453576.1">
    <property type="nucleotide sequence ID" value="NC_010725.1"/>
</dbReference>
<dbReference type="SMR" id="B1ZGG8"/>
<dbReference type="STRING" id="441620.Mpop_1665"/>
<dbReference type="KEGG" id="mpo:Mpop_1665"/>
<dbReference type="eggNOG" id="COG2171">
    <property type="taxonomic scope" value="Bacteria"/>
</dbReference>
<dbReference type="HOGENOM" id="CLU_050859_0_1_5"/>
<dbReference type="OrthoDB" id="9775362at2"/>
<dbReference type="UniPathway" id="UPA00034">
    <property type="reaction ID" value="UER00019"/>
</dbReference>
<dbReference type="Proteomes" id="UP000007136">
    <property type="component" value="Chromosome"/>
</dbReference>
<dbReference type="GO" id="GO:0005737">
    <property type="term" value="C:cytoplasm"/>
    <property type="evidence" value="ECO:0007669"/>
    <property type="project" value="UniProtKB-SubCell"/>
</dbReference>
<dbReference type="GO" id="GO:0008666">
    <property type="term" value="F:2,3,4,5-tetrahydropyridine-2,6-dicarboxylate N-succinyltransferase activity"/>
    <property type="evidence" value="ECO:0007669"/>
    <property type="project" value="UniProtKB-UniRule"/>
</dbReference>
<dbReference type="GO" id="GO:0016779">
    <property type="term" value="F:nucleotidyltransferase activity"/>
    <property type="evidence" value="ECO:0007669"/>
    <property type="project" value="TreeGrafter"/>
</dbReference>
<dbReference type="GO" id="GO:0019877">
    <property type="term" value="P:diaminopimelate biosynthetic process"/>
    <property type="evidence" value="ECO:0007669"/>
    <property type="project" value="UniProtKB-UniRule"/>
</dbReference>
<dbReference type="GO" id="GO:0009089">
    <property type="term" value="P:lysine biosynthetic process via diaminopimelate"/>
    <property type="evidence" value="ECO:0007669"/>
    <property type="project" value="UniProtKB-UniRule"/>
</dbReference>
<dbReference type="CDD" id="cd03350">
    <property type="entry name" value="LbH_THP_succinylT"/>
    <property type="match status" value="1"/>
</dbReference>
<dbReference type="Gene3D" id="2.160.10.10">
    <property type="entry name" value="Hexapeptide repeat proteins"/>
    <property type="match status" value="1"/>
</dbReference>
<dbReference type="Gene3D" id="1.10.166.10">
    <property type="entry name" value="Tetrahydrodipicolinate-N-succinyltransferase, N-terminal domain"/>
    <property type="match status" value="1"/>
</dbReference>
<dbReference type="HAMAP" id="MF_00811">
    <property type="entry name" value="DapD"/>
    <property type="match status" value="1"/>
</dbReference>
<dbReference type="InterPro" id="IPR005664">
    <property type="entry name" value="DapD_Trfase_Hexpep_rpt_fam"/>
</dbReference>
<dbReference type="InterPro" id="IPR001451">
    <property type="entry name" value="Hexapep"/>
</dbReference>
<dbReference type="InterPro" id="IPR023180">
    <property type="entry name" value="THP_succinylTrfase_dom1"/>
</dbReference>
<dbReference type="InterPro" id="IPR037133">
    <property type="entry name" value="THP_succinylTrfase_N_sf"/>
</dbReference>
<dbReference type="InterPro" id="IPR011004">
    <property type="entry name" value="Trimer_LpxA-like_sf"/>
</dbReference>
<dbReference type="NCBIfam" id="TIGR00965">
    <property type="entry name" value="dapD"/>
    <property type="match status" value="1"/>
</dbReference>
<dbReference type="NCBIfam" id="NF008808">
    <property type="entry name" value="PRK11830.1"/>
    <property type="match status" value="1"/>
</dbReference>
<dbReference type="PANTHER" id="PTHR19136:SF52">
    <property type="entry name" value="2,3,4,5-TETRAHYDROPYRIDINE-2,6-DICARBOXYLATE N-SUCCINYLTRANSFERASE"/>
    <property type="match status" value="1"/>
</dbReference>
<dbReference type="PANTHER" id="PTHR19136">
    <property type="entry name" value="MOLYBDENUM COFACTOR GUANYLYLTRANSFERASE"/>
    <property type="match status" value="1"/>
</dbReference>
<dbReference type="Pfam" id="PF14602">
    <property type="entry name" value="Hexapep_2"/>
    <property type="match status" value="1"/>
</dbReference>
<dbReference type="Pfam" id="PF14805">
    <property type="entry name" value="THDPS_N_2"/>
    <property type="match status" value="1"/>
</dbReference>
<dbReference type="SUPFAM" id="SSF51161">
    <property type="entry name" value="Trimeric LpxA-like enzymes"/>
    <property type="match status" value="1"/>
</dbReference>
<gene>
    <name evidence="1" type="primary">dapD</name>
    <name type="ordered locus">Mpop_1665</name>
</gene>
<sequence length="280" mass="29385">MSYANLEQTIEAAWEERAGISTATTGAVREAVDEALNLLDSGKARVAEKAGDAWQVNQWLKKAVLLSFRLNDMVPIEGGPGSSAWWDKVPSKFSGWGETEFRAAGFRAVPGCFVRRGSYIAPGAVLMPSFINLGAHVGEGTMVDTWVTIGSCAQVGKNCHISGGAGIAGVLEPLQANPVIIEDNCFIGARAEVAEGVIVGEGSVLSMGVYIGASTRIIDRTTGETFYGRVPPYSVVVSGTTPGKPLPDGTPGPGLYCAVIVKRVDAGTRAKTGINELLRT</sequence>
<reference key="1">
    <citation type="submission" date="2008-04" db="EMBL/GenBank/DDBJ databases">
        <title>Complete sequence of chromosome of Methylobacterium populi BJ001.</title>
        <authorList>
            <consortium name="US DOE Joint Genome Institute"/>
            <person name="Copeland A."/>
            <person name="Lucas S."/>
            <person name="Lapidus A."/>
            <person name="Glavina del Rio T."/>
            <person name="Dalin E."/>
            <person name="Tice H."/>
            <person name="Bruce D."/>
            <person name="Goodwin L."/>
            <person name="Pitluck S."/>
            <person name="Chertkov O."/>
            <person name="Brettin T."/>
            <person name="Detter J.C."/>
            <person name="Han C."/>
            <person name="Kuske C.R."/>
            <person name="Schmutz J."/>
            <person name="Larimer F."/>
            <person name="Land M."/>
            <person name="Hauser L."/>
            <person name="Kyrpides N."/>
            <person name="Mikhailova N."/>
            <person name="Marx C."/>
            <person name="Richardson P."/>
        </authorList>
    </citation>
    <scope>NUCLEOTIDE SEQUENCE [LARGE SCALE GENOMIC DNA]</scope>
    <source>
        <strain>ATCC BAA-705 / NCIMB 13946 / BJ001</strain>
    </source>
</reference>
<proteinExistence type="inferred from homology"/>
<keyword id="KW-0012">Acyltransferase</keyword>
<keyword id="KW-0028">Amino-acid biosynthesis</keyword>
<keyword id="KW-0963">Cytoplasm</keyword>
<keyword id="KW-0220">Diaminopimelate biosynthesis</keyword>
<keyword id="KW-0457">Lysine biosynthesis</keyword>
<keyword id="KW-0677">Repeat</keyword>
<keyword id="KW-0808">Transferase</keyword>
<evidence type="ECO:0000255" key="1">
    <source>
        <dbReference type="HAMAP-Rule" id="MF_00811"/>
    </source>
</evidence>
<comment type="catalytic activity">
    <reaction evidence="1">
        <text>(S)-2,3,4,5-tetrahydrodipicolinate + succinyl-CoA + H2O = (S)-2-succinylamino-6-oxoheptanedioate + CoA</text>
        <dbReference type="Rhea" id="RHEA:17325"/>
        <dbReference type="ChEBI" id="CHEBI:15377"/>
        <dbReference type="ChEBI" id="CHEBI:15685"/>
        <dbReference type="ChEBI" id="CHEBI:16845"/>
        <dbReference type="ChEBI" id="CHEBI:57287"/>
        <dbReference type="ChEBI" id="CHEBI:57292"/>
        <dbReference type="EC" id="2.3.1.117"/>
    </reaction>
</comment>
<comment type="pathway">
    <text evidence="1">Amino-acid biosynthesis; L-lysine biosynthesis via DAP pathway; LL-2,6-diaminopimelate from (S)-tetrahydrodipicolinate (succinylase route): step 1/3.</text>
</comment>
<comment type="subcellular location">
    <subcellularLocation>
        <location evidence="1">Cytoplasm</location>
    </subcellularLocation>
</comment>
<comment type="similarity">
    <text evidence="1">Belongs to the transferase hexapeptide repeat family.</text>
</comment>
<organism>
    <name type="scientific">Methylorubrum populi (strain ATCC BAA-705 / NCIMB 13946 / BJ001)</name>
    <name type="common">Methylobacterium populi</name>
    <dbReference type="NCBI Taxonomy" id="441620"/>
    <lineage>
        <taxon>Bacteria</taxon>
        <taxon>Pseudomonadati</taxon>
        <taxon>Pseudomonadota</taxon>
        <taxon>Alphaproteobacteria</taxon>
        <taxon>Hyphomicrobiales</taxon>
        <taxon>Methylobacteriaceae</taxon>
        <taxon>Methylorubrum</taxon>
    </lineage>
</organism>
<protein>
    <recommendedName>
        <fullName evidence="1">2,3,4,5-tetrahydropyridine-2,6-dicarboxylate N-succinyltransferase</fullName>
        <ecNumber evidence="1">2.3.1.117</ecNumber>
    </recommendedName>
    <alternativeName>
        <fullName evidence="1">Tetrahydrodipicolinate N-succinyltransferase</fullName>
        <shortName evidence="1">THP succinyltransferase</shortName>
        <shortName evidence="1">Tetrahydropicolinate succinylase</shortName>
    </alternativeName>
</protein>
<name>DAPD_METPB</name>